<reference key="1">
    <citation type="journal article" date="1993" name="Protein Seq. Data Anal.">
        <title>Feline beta-lactoglobulins I, II and III, and canine beta-lactoglobulins I and II: amino acid sequences provide evidence for the existence of more than one gene for beta-lactoglobulin in the cat and dog.</title>
        <authorList>
            <person name="Halliday J.A."/>
            <person name="Bell K."/>
            <person name="McAndrew K."/>
            <person name="Shaw D.C."/>
        </authorList>
    </citation>
    <scope>PROTEIN SEQUENCE</scope>
</reference>
<reference key="2">
    <citation type="journal article" date="1986" name="Arch. Biochem. Biophys.">
        <title>Purification and characterization of the major whey proteins from the milks of the bottlenose dolphin (Tursiops truncatus), the Florida manatee (Trichechus manatus latirostris), and the beagle (Canis familiaris).</title>
        <authorList>
            <person name="Pervaiz S."/>
            <person name="Brew K."/>
        </authorList>
    </citation>
    <scope>PROTEIN SEQUENCE OF N-TERMINUS</scope>
    <scope>CHARACTERIZATION</scope>
    <source>
        <strain>Beagle</strain>
    </source>
</reference>
<keyword id="KW-0903">Direct protein sequencing</keyword>
<keyword id="KW-1015">Disulfide bond</keyword>
<keyword id="KW-0494">Milk protein</keyword>
<keyword id="KW-1185">Reference proteome</keyword>
<keyword id="KW-0683">Retinol-binding</keyword>
<keyword id="KW-0964">Secreted</keyword>
<keyword id="KW-0813">Transport</keyword>
<organism>
    <name type="scientific">Canis lupus familiaris</name>
    <name type="common">Dog</name>
    <name type="synonym">Canis familiaris</name>
    <dbReference type="NCBI Taxonomy" id="9615"/>
    <lineage>
        <taxon>Eukaryota</taxon>
        <taxon>Metazoa</taxon>
        <taxon>Chordata</taxon>
        <taxon>Craniata</taxon>
        <taxon>Vertebrata</taxon>
        <taxon>Euteleostomi</taxon>
        <taxon>Mammalia</taxon>
        <taxon>Eutheria</taxon>
        <taxon>Laurasiatheria</taxon>
        <taxon>Carnivora</taxon>
        <taxon>Caniformia</taxon>
        <taxon>Canidae</taxon>
        <taxon>Canis</taxon>
    </lineage>
</organism>
<feature type="chain" id="PRO_0000201013" description="Beta-lactoglobulin-1">
    <location>
        <begin position="1"/>
        <end position="161"/>
    </location>
</feature>
<feature type="disulfide bond" evidence="1">
    <location>
        <begin position="66"/>
        <end position="159"/>
    </location>
</feature>
<feature type="disulfide bond" evidence="1">
    <location>
        <begin position="106"/>
        <end position="119"/>
    </location>
</feature>
<accession>P33685</accession>
<comment type="function">
    <text>Primary component of whey, it binds retinol and is probably involved in the transport of that molecule.</text>
</comment>
<comment type="subunit">
    <text>Monomer.</text>
</comment>
<comment type="subcellular location">
    <subcellularLocation>
        <location>Secreted</location>
    </subcellularLocation>
</comment>
<comment type="tissue specificity">
    <text>Synthesized in mammary gland and secreted in milk.</text>
</comment>
<comment type="similarity">
    <text evidence="2">Belongs to the calycin superfamily. Lipocalin family.</text>
</comment>
<dbReference type="PIR" id="S33877">
    <property type="entry name" value="S33877"/>
</dbReference>
<dbReference type="SMR" id="P33685"/>
<dbReference type="FunCoup" id="P33685">
    <property type="interactions" value="2"/>
</dbReference>
<dbReference type="PaxDb" id="9612-ENSCAFP00000029239"/>
<dbReference type="eggNOG" id="ENOG502T0EI">
    <property type="taxonomic scope" value="Eukaryota"/>
</dbReference>
<dbReference type="InParanoid" id="P33685"/>
<dbReference type="Proteomes" id="UP000002254">
    <property type="component" value="Unplaced"/>
</dbReference>
<dbReference type="Proteomes" id="UP000694429">
    <property type="component" value="Unplaced"/>
</dbReference>
<dbReference type="Proteomes" id="UP000694542">
    <property type="component" value="Unplaced"/>
</dbReference>
<dbReference type="Proteomes" id="UP000805418">
    <property type="component" value="Unplaced"/>
</dbReference>
<dbReference type="GO" id="GO:0005576">
    <property type="term" value="C:extracellular region"/>
    <property type="evidence" value="ECO:0007669"/>
    <property type="project" value="UniProtKB-SubCell"/>
</dbReference>
<dbReference type="GO" id="GO:0019841">
    <property type="term" value="F:retinol binding"/>
    <property type="evidence" value="ECO:0007669"/>
    <property type="project" value="UniProtKB-KW"/>
</dbReference>
<dbReference type="CDD" id="cd19416">
    <property type="entry name" value="lipocalin_beta-LG-like"/>
    <property type="match status" value="1"/>
</dbReference>
<dbReference type="Gene3D" id="2.40.128.20">
    <property type="match status" value="1"/>
</dbReference>
<dbReference type="InterPro" id="IPR002447">
    <property type="entry name" value="Blactoglobulin"/>
</dbReference>
<dbReference type="InterPro" id="IPR012674">
    <property type="entry name" value="Calycin"/>
</dbReference>
<dbReference type="InterPro" id="IPR002345">
    <property type="entry name" value="Lipocalin"/>
</dbReference>
<dbReference type="InterPro" id="IPR022272">
    <property type="entry name" value="Lipocalin_CS"/>
</dbReference>
<dbReference type="InterPro" id="IPR000566">
    <property type="entry name" value="Lipocln_cytosolic_FA-bd_dom"/>
</dbReference>
<dbReference type="PANTHER" id="PTHR11430:SF117">
    <property type="entry name" value="GLYCODELIN"/>
    <property type="match status" value="1"/>
</dbReference>
<dbReference type="PANTHER" id="PTHR11430">
    <property type="entry name" value="LIPOCALIN"/>
    <property type="match status" value="1"/>
</dbReference>
<dbReference type="Pfam" id="PF00061">
    <property type="entry name" value="Lipocalin"/>
    <property type="match status" value="1"/>
</dbReference>
<dbReference type="PRINTS" id="PR01172">
    <property type="entry name" value="BLCTOGLOBULN"/>
</dbReference>
<dbReference type="PRINTS" id="PR00179">
    <property type="entry name" value="LIPOCALIN"/>
</dbReference>
<dbReference type="SUPFAM" id="SSF50814">
    <property type="entry name" value="Lipocalins"/>
    <property type="match status" value="1"/>
</dbReference>
<dbReference type="PROSITE" id="PS00213">
    <property type="entry name" value="LIPOCALIN"/>
    <property type="match status" value="1"/>
</dbReference>
<proteinExistence type="evidence at protein level"/>
<gene>
    <name type="primary">LGB1</name>
</gene>
<evidence type="ECO:0000250" key="1"/>
<evidence type="ECO:0000305" key="2"/>
<protein>
    <recommendedName>
        <fullName>Beta-lactoglobulin-1</fullName>
        <shortName>Beta-LG-1</shortName>
    </recommendedName>
    <alternativeName>
        <fullName>Beta-lactoglobulin I</fullName>
    </alternativeName>
</protein>
<name>LACB1_CANLF</name>
<sequence length="161" mass="18567">IVVPRTMEDLDLQKVAGTWHSMAMAASDISLLDSETAPLRVYIQELRPTPQDNLEIVLRKWEDGRCAEQKVLAEKTEVPAEFKINYVEENQIFLLDTDYDNYLFFCEMNADAPQQSLMCQCLARTLEVDNEVMEKFNRALKTLPVHMQLLNPTQAEEQCLI</sequence>